<evidence type="ECO:0000255" key="1">
    <source>
        <dbReference type="HAMAP-Rule" id="MF_00277"/>
    </source>
</evidence>
<evidence type="ECO:0000255" key="2">
    <source>
        <dbReference type="PROSITE-ProRule" id="PRU01175"/>
    </source>
</evidence>
<evidence type="ECO:0000256" key="3">
    <source>
        <dbReference type="SAM" id="MobiDB-lite"/>
    </source>
</evidence>
<gene>
    <name evidence="1" type="primary">glnD</name>
    <name type="ordered locus">SeAg_B0253</name>
</gene>
<organism>
    <name type="scientific">Salmonella agona (strain SL483)</name>
    <dbReference type="NCBI Taxonomy" id="454166"/>
    <lineage>
        <taxon>Bacteria</taxon>
        <taxon>Pseudomonadati</taxon>
        <taxon>Pseudomonadota</taxon>
        <taxon>Gammaproteobacteria</taxon>
        <taxon>Enterobacterales</taxon>
        <taxon>Enterobacteriaceae</taxon>
        <taxon>Salmonella</taxon>
    </lineage>
</organism>
<reference key="1">
    <citation type="journal article" date="2011" name="J. Bacteriol.">
        <title>Comparative genomics of 28 Salmonella enterica isolates: evidence for CRISPR-mediated adaptive sublineage evolution.</title>
        <authorList>
            <person name="Fricke W.F."/>
            <person name="Mammel M.K."/>
            <person name="McDermott P.F."/>
            <person name="Tartera C."/>
            <person name="White D.G."/>
            <person name="Leclerc J.E."/>
            <person name="Ravel J."/>
            <person name="Cebula T.A."/>
        </authorList>
    </citation>
    <scope>NUCLEOTIDE SEQUENCE [LARGE SCALE GENOMIC DNA]</scope>
    <source>
        <strain>SL483</strain>
    </source>
</reference>
<protein>
    <recommendedName>
        <fullName evidence="1">Bifunctional uridylyltransferase/uridylyl-removing enzyme</fullName>
        <shortName evidence="1">UTase/UR</shortName>
    </recommendedName>
    <alternativeName>
        <fullName evidence="1">Bifunctional [protein-PII] modification enzyme</fullName>
    </alternativeName>
    <alternativeName>
        <fullName evidence="1">Bifunctional nitrogen sensor protein</fullName>
    </alternativeName>
    <domain>
        <recommendedName>
            <fullName evidence="1">[Protein-PII] uridylyltransferase</fullName>
            <shortName evidence="1">PII uridylyltransferase</shortName>
            <shortName evidence="1">UTase</shortName>
            <ecNumber evidence="1">2.7.7.59</ecNumber>
        </recommendedName>
    </domain>
    <domain>
        <recommendedName>
            <fullName evidence="1">[Protein-PII]-UMP uridylyl-removing enzyme</fullName>
            <shortName evidence="1">UR</shortName>
            <ecNumber evidence="1">3.1.4.-</ecNumber>
        </recommendedName>
    </domain>
</protein>
<feature type="chain" id="PRO_1000114759" description="Bifunctional uridylyltransferase/uridylyl-removing enzyme">
    <location>
        <begin position="1"/>
        <end position="890"/>
    </location>
</feature>
<feature type="domain" description="HD" evidence="2">
    <location>
        <begin position="468"/>
        <end position="590"/>
    </location>
</feature>
<feature type="domain" description="ACT 1" evidence="1">
    <location>
        <begin position="709"/>
        <end position="784"/>
    </location>
</feature>
<feature type="domain" description="ACT 2" evidence="1">
    <location>
        <begin position="816"/>
        <end position="890"/>
    </location>
</feature>
<feature type="region of interest" description="Uridylyltransferase">
    <location>
        <begin position="1"/>
        <end position="349"/>
    </location>
</feature>
<feature type="region of interest" description="Disordered" evidence="3">
    <location>
        <begin position="1"/>
        <end position="21"/>
    </location>
</feature>
<feature type="region of interest" description="Uridylyl-removing">
    <location>
        <begin position="350"/>
        <end position="708"/>
    </location>
</feature>
<accession>B5F8S8</accession>
<comment type="function">
    <text evidence="1">Modifies, by uridylylation and deuridylylation, the PII regulatory proteins (GlnB and homologs), in response to the nitrogen status of the cell that GlnD senses through the glutamine level. Under low glutamine levels, catalyzes the conversion of the PII proteins and UTP to PII-UMP and PPi, while under higher glutamine levels, GlnD hydrolyzes PII-UMP to PII and UMP (deuridylylation). Thus, controls uridylylation state and activity of the PII proteins, and plays an important role in the regulation of nitrogen assimilation and metabolism.</text>
</comment>
<comment type="catalytic activity">
    <reaction evidence="1">
        <text>[protein-PII]-L-tyrosine + UTP = [protein-PII]-uridylyl-L-tyrosine + diphosphate</text>
        <dbReference type="Rhea" id="RHEA:13673"/>
        <dbReference type="Rhea" id="RHEA-COMP:12147"/>
        <dbReference type="Rhea" id="RHEA-COMP:12148"/>
        <dbReference type="ChEBI" id="CHEBI:33019"/>
        <dbReference type="ChEBI" id="CHEBI:46398"/>
        <dbReference type="ChEBI" id="CHEBI:46858"/>
        <dbReference type="ChEBI" id="CHEBI:90602"/>
        <dbReference type="EC" id="2.7.7.59"/>
    </reaction>
</comment>
<comment type="catalytic activity">
    <reaction evidence="1">
        <text>[protein-PII]-uridylyl-L-tyrosine + H2O = [protein-PII]-L-tyrosine + UMP + H(+)</text>
        <dbReference type="Rhea" id="RHEA:48600"/>
        <dbReference type="Rhea" id="RHEA-COMP:12147"/>
        <dbReference type="Rhea" id="RHEA-COMP:12148"/>
        <dbReference type="ChEBI" id="CHEBI:15377"/>
        <dbReference type="ChEBI" id="CHEBI:15378"/>
        <dbReference type="ChEBI" id="CHEBI:46858"/>
        <dbReference type="ChEBI" id="CHEBI:57865"/>
        <dbReference type="ChEBI" id="CHEBI:90602"/>
    </reaction>
</comment>
<comment type="cofactor">
    <cofactor evidence="1">
        <name>Mg(2+)</name>
        <dbReference type="ChEBI" id="CHEBI:18420"/>
    </cofactor>
</comment>
<comment type="activity regulation">
    <text evidence="1">Uridylyltransferase (UTase) activity is inhibited by glutamine, while glutamine activates uridylyl-removing (UR) activity.</text>
</comment>
<comment type="domain">
    <text evidence="1">Has four distinct domains: an N-terminal nucleotidyltransferase (NT) domain responsible for UTase activity, a central HD domain that encodes UR activity, and two C-terminal ACT domains that seem to have a role in glutamine sensing.</text>
</comment>
<comment type="similarity">
    <text evidence="1">Belongs to the GlnD family.</text>
</comment>
<dbReference type="EC" id="2.7.7.59" evidence="1"/>
<dbReference type="EC" id="3.1.4.-" evidence="1"/>
<dbReference type="EMBL" id="CP001138">
    <property type="protein sequence ID" value="ACH49835.1"/>
    <property type="molecule type" value="Genomic_DNA"/>
</dbReference>
<dbReference type="RefSeq" id="WP_001094522.1">
    <property type="nucleotide sequence ID" value="NC_011149.1"/>
</dbReference>
<dbReference type="SMR" id="B5F8S8"/>
<dbReference type="KEGG" id="sea:SeAg_B0253"/>
<dbReference type="HOGENOM" id="CLU_012833_0_0_6"/>
<dbReference type="Proteomes" id="UP000008819">
    <property type="component" value="Chromosome"/>
</dbReference>
<dbReference type="GO" id="GO:0008773">
    <property type="term" value="F:[protein-PII] uridylyltransferase activity"/>
    <property type="evidence" value="ECO:0007669"/>
    <property type="project" value="UniProtKB-UniRule"/>
</dbReference>
<dbReference type="GO" id="GO:0008081">
    <property type="term" value="F:phosphoric diester hydrolase activity"/>
    <property type="evidence" value="ECO:0007669"/>
    <property type="project" value="UniProtKB-UniRule"/>
</dbReference>
<dbReference type="GO" id="GO:0006808">
    <property type="term" value="P:regulation of nitrogen utilization"/>
    <property type="evidence" value="ECO:0007669"/>
    <property type="project" value="UniProtKB-UniRule"/>
</dbReference>
<dbReference type="CDD" id="cd04899">
    <property type="entry name" value="ACT_ACR-UUR-like_2"/>
    <property type="match status" value="1"/>
</dbReference>
<dbReference type="CDD" id="cd04900">
    <property type="entry name" value="ACT_UUR-like_1"/>
    <property type="match status" value="1"/>
</dbReference>
<dbReference type="CDD" id="cd00077">
    <property type="entry name" value="HDc"/>
    <property type="match status" value="1"/>
</dbReference>
<dbReference type="CDD" id="cd05401">
    <property type="entry name" value="NT_GlnE_GlnD_like"/>
    <property type="match status" value="1"/>
</dbReference>
<dbReference type="FunFam" id="1.10.3210.10:FF:000005">
    <property type="entry name" value="Bifunctional uridylyltransferase/uridylyl-removing enzyme"/>
    <property type="match status" value="1"/>
</dbReference>
<dbReference type="Gene3D" id="1.10.3210.10">
    <property type="entry name" value="Hypothetical protein af1432"/>
    <property type="match status" value="1"/>
</dbReference>
<dbReference type="Gene3D" id="1.20.120.330">
    <property type="entry name" value="Nucleotidyltransferases domain 2"/>
    <property type="match status" value="1"/>
</dbReference>
<dbReference type="HAMAP" id="MF_00277">
    <property type="entry name" value="PII_uridylyl_transf"/>
    <property type="match status" value="1"/>
</dbReference>
<dbReference type="InterPro" id="IPR045865">
    <property type="entry name" value="ACT-like_dom_sf"/>
</dbReference>
<dbReference type="InterPro" id="IPR002912">
    <property type="entry name" value="ACT_dom"/>
</dbReference>
<dbReference type="InterPro" id="IPR003607">
    <property type="entry name" value="HD/PDEase_dom"/>
</dbReference>
<dbReference type="InterPro" id="IPR006674">
    <property type="entry name" value="HD_domain"/>
</dbReference>
<dbReference type="InterPro" id="IPR043519">
    <property type="entry name" value="NT_sf"/>
</dbReference>
<dbReference type="InterPro" id="IPR013546">
    <property type="entry name" value="PII_UdlTrfase/GS_AdlTrfase"/>
</dbReference>
<dbReference type="InterPro" id="IPR002934">
    <property type="entry name" value="Polymerase_NTP_transf_dom"/>
</dbReference>
<dbReference type="InterPro" id="IPR010043">
    <property type="entry name" value="UTase/UR"/>
</dbReference>
<dbReference type="NCBIfam" id="NF002487">
    <property type="entry name" value="PRK01759.1"/>
    <property type="match status" value="1"/>
</dbReference>
<dbReference type="NCBIfam" id="NF003448">
    <property type="entry name" value="PRK05007.1"/>
    <property type="match status" value="1"/>
</dbReference>
<dbReference type="NCBIfam" id="TIGR01693">
    <property type="entry name" value="UTase_glnD"/>
    <property type="match status" value="1"/>
</dbReference>
<dbReference type="PANTHER" id="PTHR47320">
    <property type="entry name" value="BIFUNCTIONAL URIDYLYLTRANSFERASE/URIDYLYL-REMOVING ENZYME"/>
    <property type="match status" value="1"/>
</dbReference>
<dbReference type="PANTHER" id="PTHR47320:SF1">
    <property type="entry name" value="BIFUNCTIONAL URIDYLYLTRANSFERASE_URIDYLYL-REMOVING ENZYME"/>
    <property type="match status" value="1"/>
</dbReference>
<dbReference type="Pfam" id="PF01842">
    <property type="entry name" value="ACT"/>
    <property type="match status" value="2"/>
</dbReference>
<dbReference type="Pfam" id="PF08335">
    <property type="entry name" value="GlnD_UR_UTase"/>
    <property type="match status" value="1"/>
</dbReference>
<dbReference type="Pfam" id="PF01966">
    <property type="entry name" value="HD"/>
    <property type="match status" value="1"/>
</dbReference>
<dbReference type="Pfam" id="PF01909">
    <property type="entry name" value="NTP_transf_2"/>
    <property type="match status" value="1"/>
</dbReference>
<dbReference type="PIRSF" id="PIRSF006288">
    <property type="entry name" value="PII_uridyltransf"/>
    <property type="match status" value="1"/>
</dbReference>
<dbReference type="SMART" id="SM00471">
    <property type="entry name" value="HDc"/>
    <property type="match status" value="1"/>
</dbReference>
<dbReference type="SUPFAM" id="SSF55021">
    <property type="entry name" value="ACT-like"/>
    <property type="match status" value="2"/>
</dbReference>
<dbReference type="SUPFAM" id="SSF109604">
    <property type="entry name" value="HD-domain/PDEase-like"/>
    <property type="match status" value="1"/>
</dbReference>
<dbReference type="SUPFAM" id="SSF81301">
    <property type="entry name" value="Nucleotidyltransferase"/>
    <property type="match status" value="1"/>
</dbReference>
<dbReference type="SUPFAM" id="SSF81593">
    <property type="entry name" value="Nucleotidyltransferase substrate binding subunit/domain"/>
    <property type="match status" value="1"/>
</dbReference>
<dbReference type="PROSITE" id="PS51671">
    <property type="entry name" value="ACT"/>
    <property type="match status" value="2"/>
</dbReference>
<dbReference type="PROSITE" id="PS51831">
    <property type="entry name" value="HD"/>
    <property type="match status" value="1"/>
</dbReference>
<sequence length="890" mass="102222">MNTLPEQHANTALPTLPDQPQNPGVWPRAELTVAGIKARIDIFQHWLGEAFDSGICAEQLIEARTEFIDQLLQRLWIEAGFGQIADLALVAVGGYGRGELHPLSDIDLLILSRKKLPDEQAQKVGELLTLLWDVKLDVGHSVRTLEECLLEGLSDLTVATNLIETRLLIGDVALFLALQKHIFSEGFWPSDKFYAAKVEEQNQRHQRYHGTSYNLEPDIKSSPGGLRDIHTLQWVARRHFGATSLDEMVGFGFLTPAERAELNECLHILWRIRFALHLVVSRYDNRLLFDRQLSVAQRLNYSGEGNDPVERMMKDYFRVTRRVSELNQMLLQLFDEAILALPADEKPRPVDDEFQLRGTLIDLRDDTLFIREPQAILRMFYMMVRNSAITGIYSTTLRHLRHARRHLSQPLCYIPEARTLFLSMLRHPGAVSRGLLPMHRHSVLWAYMPQWSHIVGQMQFDLFHAYTVDEHTIRVMLKLESFAKEETRQRHPLCVDLWPRLPHPELILIAALFHDIAKGRGGDHSVLGAQDVLTFAELHGLNSRETQLVAWLVRQHLLMSVTAQRRDIQDPEVIKQFAEEVQTETRLRFLVCLTVADICATNETLWNSWKQSLLRELYFATEKQLRRGMQNTPDMRERVRHHQLQALALLRMDNIDEAALHKIWTRCRANYFVRHSPNQLAWHARHLLQHDLSQPLVLLSPQATRGGTEIFIWSPDRPYLFAAVCAELDRRNLSVHDAQIFTTRDGMAMDTFIVLEPDGNPLAADRHDVIRTGLEQTITQRSWQPPQPRRQPAKLRHFTVETEVNFLPTHTDRKSFMELIALDQPGLLARVGQIFADLGISLHGARITTIGERVEDLFIIATADRRALNNVLQLEVQQRLTAALNPNDKG</sequence>
<keyword id="KW-0378">Hydrolase</keyword>
<keyword id="KW-0460">Magnesium</keyword>
<keyword id="KW-0511">Multifunctional enzyme</keyword>
<keyword id="KW-0548">Nucleotidyltransferase</keyword>
<keyword id="KW-0677">Repeat</keyword>
<keyword id="KW-0808">Transferase</keyword>
<proteinExistence type="inferred from homology"/>
<name>GLND_SALA4</name>